<accession>B8IHY5</accession>
<reference key="1">
    <citation type="submission" date="2009-01" db="EMBL/GenBank/DDBJ databases">
        <title>Complete sequence of chromosome of Methylobacterium nodulans ORS 2060.</title>
        <authorList>
            <consortium name="US DOE Joint Genome Institute"/>
            <person name="Lucas S."/>
            <person name="Copeland A."/>
            <person name="Lapidus A."/>
            <person name="Glavina del Rio T."/>
            <person name="Dalin E."/>
            <person name="Tice H."/>
            <person name="Bruce D."/>
            <person name="Goodwin L."/>
            <person name="Pitluck S."/>
            <person name="Sims D."/>
            <person name="Brettin T."/>
            <person name="Detter J.C."/>
            <person name="Han C."/>
            <person name="Larimer F."/>
            <person name="Land M."/>
            <person name="Hauser L."/>
            <person name="Kyrpides N."/>
            <person name="Ivanova N."/>
            <person name="Marx C.J."/>
            <person name="Richardson P."/>
        </authorList>
    </citation>
    <scope>NUCLEOTIDE SEQUENCE [LARGE SCALE GENOMIC DNA]</scope>
    <source>
        <strain>LMG 21967 / CNCM I-2342 / ORS 2060</strain>
    </source>
</reference>
<protein>
    <recommendedName>
        <fullName evidence="1">2,3,4,5-tetrahydropyridine-2,6-dicarboxylate N-succinyltransferase</fullName>
        <ecNumber evidence="1">2.3.1.117</ecNumber>
    </recommendedName>
    <alternativeName>
        <fullName evidence="1">Tetrahydrodipicolinate N-succinyltransferase</fullName>
        <shortName evidence="1">THDP succinyltransferase</shortName>
        <shortName evidence="1">THP succinyltransferase</shortName>
        <shortName evidence="1">Tetrahydropicolinate succinylase</shortName>
    </alternativeName>
</protein>
<dbReference type="EC" id="2.3.1.117" evidence="1"/>
<dbReference type="EMBL" id="CP001349">
    <property type="protein sequence ID" value="ACL56023.1"/>
    <property type="molecule type" value="Genomic_DNA"/>
</dbReference>
<dbReference type="RefSeq" id="WP_015927721.1">
    <property type="nucleotide sequence ID" value="NC_011894.1"/>
</dbReference>
<dbReference type="SMR" id="B8IHY5"/>
<dbReference type="STRING" id="460265.Mnod_1015"/>
<dbReference type="KEGG" id="mno:Mnod_1015"/>
<dbReference type="eggNOG" id="COG2171">
    <property type="taxonomic scope" value="Bacteria"/>
</dbReference>
<dbReference type="HOGENOM" id="CLU_050859_0_1_5"/>
<dbReference type="OrthoDB" id="9775362at2"/>
<dbReference type="UniPathway" id="UPA00034">
    <property type="reaction ID" value="UER00019"/>
</dbReference>
<dbReference type="Proteomes" id="UP000008207">
    <property type="component" value="Chromosome"/>
</dbReference>
<dbReference type="GO" id="GO:0005737">
    <property type="term" value="C:cytoplasm"/>
    <property type="evidence" value="ECO:0007669"/>
    <property type="project" value="UniProtKB-SubCell"/>
</dbReference>
<dbReference type="GO" id="GO:0008666">
    <property type="term" value="F:2,3,4,5-tetrahydropyridine-2,6-dicarboxylate N-succinyltransferase activity"/>
    <property type="evidence" value="ECO:0007669"/>
    <property type="project" value="UniProtKB-UniRule"/>
</dbReference>
<dbReference type="GO" id="GO:0016779">
    <property type="term" value="F:nucleotidyltransferase activity"/>
    <property type="evidence" value="ECO:0007669"/>
    <property type="project" value="TreeGrafter"/>
</dbReference>
<dbReference type="GO" id="GO:0019877">
    <property type="term" value="P:diaminopimelate biosynthetic process"/>
    <property type="evidence" value="ECO:0007669"/>
    <property type="project" value="UniProtKB-UniRule"/>
</dbReference>
<dbReference type="GO" id="GO:0009089">
    <property type="term" value="P:lysine biosynthetic process via diaminopimelate"/>
    <property type="evidence" value="ECO:0007669"/>
    <property type="project" value="UniProtKB-UniRule"/>
</dbReference>
<dbReference type="CDD" id="cd03350">
    <property type="entry name" value="LbH_THP_succinylT"/>
    <property type="match status" value="1"/>
</dbReference>
<dbReference type="Gene3D" id="2.160.10.10">
    <property type="entry name" value="Hexapeptide repeat proteins"/>
    <property type="match status" value="1"/>
</dbReference>
<dbReference type="Gene3D" id="1.10.166.10">
    <property type="entry name" value="Tetrahydrodipicolinate-N-succinyltransferase, N-terminal domain"/>
    <property type="match status" value="1"/>
</dbReference>
<dbReference type="HAMAP" id="MF_00811">
    <property type="entry name" value="DapD"/>
    <property type="match status" value="1"/>
</dbReference>
<dbReference type="InterPro" id="IPR005664">
    <property type="entry name" value="DapD_Trfase_Hexpep_rpt_fam"/>
</dbReference>
<dbReference type="InterPro" id="IPR001451">
    <property type="entry name" value="Hexapep"/>
</dbReference>
<dbReference type="InterPro" id="IPR023180">
    <property type="entry name" value="THP_succinylTrfase_dom1"/>
</dbReference>
<dbReference type="InterPro" id="IPR037133">
    <property type="entry name" value="THP_succinylTrfase_N_sf"/>
</dbReference>
<dbReference type="InterPro" id="IPR011004">
    <property type="entry name" value="Trimer_LpxA-like_sf"/>
</dbReference>
<dbReference type="NCBIfam" id="TIGR00965">
    <property type="entry name" value="dapD"/>
    <property type="match status" value="1"/>
</dbReference>
<dbReference type="NCBIfam" id="NF008808">
    <property type="entry name" value="PRK11830.1"/>
    <property type="match status" value="1"/>
</dbReference>
<dbReference type="PANTHER" id="PTHR19136:SF52">
    <property type="entry name" value="2,3,4,5-TETRAHYDROPYRIDINE-2,6-DICARBOXYLATE N-SUCCINYLTRANSFERASE"/>
    <property type="match status" value="1"/>
</dbReference>
<dbReference type="PANTHER" id="PTHR19136">
    <property type="entry name" value="MOLYBDENUM COFACTOR GUANYLYLTRANSFERASE"/>
    <property type="match status" value="1"/>
</dbReference>
<dbReference type="Pfam" id="PF14602">
    <property type="entry name" value="Hexapep_2"/>
    <property type="match status" value="1"/>
</dbReference>
<dbReference type="Pfam" id="PF14805">
    <property type="entry name" value="THDPS_N_2"/>
    <property type="match status" value="1"/>
</dbReference>
<dbReference type="SUPFAM" id="SSF51161">
    <property type="entry name" value="Trimeric LpxA-like enzymes"/>
    <property type="match status" value="1"/>
</dbReference>
<feature type="chain" id="PRO_1000148586" description="2,3,4,5-tetrahydropyridine-2,6-dicarboxylate N-succinyltransferase">
    <location>
        <begin position="1"/>
        <end position="281"/>
    </location>
</feature>
<feature type="binding site" evidence="1">
    <location>
        <position position="108"/>
    </location>
    <ligand>
        <name>substrate</name>
    </ligand>
</feature>
<feature type="binding site" evidence="1">
    <location>
        <position position="145"/>
    </location>
    <ligand>
        <name>substrate</name>
    </ligand>
</feature>
<organism>
    <name type="scientific">Methylobacterium nodulans (strain LMG 21967 / CNCM I-2342 / ORS 2060)</name>
    <dbReference type="NCBI Taxonomy" id="460265"/>
    <lineage>
        <taxon>Bacteria</taxon>
        <taxon>Pseudomonadati</taxon>
        <taxon>Pseudomonadota</taxon>
        <taxon>Alphaproteobacteria</taxon>
        <taxon>Hyphomicrobiales</taxon>
        <taxon>Methylobacteriaceae</taxon>
        <taxon>Methylobacterium</taxon>
    </lineage>
</organism>
<gene>
    <name evidence="1" type="primary">dapD</name>
    <name type="ordered locus">Mnod_1015</name>
</gene>
<keyword id="KW-0012">Acyltransferase</keyword>
<keyword id="KW-0028">Amino-acid biosynthesis</keyword>
<keyword id="KW-0963">Cytoplasm</keyword>
<keyword id="KW-0220">Diaminopimelate biosynthesis</keyword>
<keyword id="KW-0457">Lysine biosynthesis</keyword>
<keyword id="KW-1185">Reference proteome</keyword>
<keyword id="KW-0677">Repeat</keyword>
<keyword id="KW-0808">Transferase</keyword>
<name>DAPD_METNO</name>
<comment type="catalytic activity">
    <reaction evidence="1">
        <text>(S)-2,3,4,5-tetrahydrodipicolinate + succinyl-CoA + H2O = (S)-2-succinylamino-6-oxoheptanedioate + CoA</text>
        <dbReference type="Rhea" id="RHEA:17325"/>
        <dbReference type="ChEBI" id="CHEBI:15377"/>
        <dbReference type="ChEBI" id="CHEBI:15685"/>
        <dbReference type="ChEBI" id="CHEBI:16845"/>
        <dbReference type="ChEBI" id="CHEBI:57287"/>
        <dbReference type="ChEBI" id="CHEBI:57292"/>
        <dbReference type="EC" id="2.3.1.117"/>
    </reaction>
</comment>
<comment type="pathway">
    <text evidence="1">Amino-acid biosynthesis; L-lysine biosynthesis via DAP pathway; LL-2,6-diaminopimelate from (S)-tetrahydrodipicolinate (succinylase route): step 1/3.</text>
</comment>
<comment type="subunit">
    <text evidence="1">Homotrimer.</text>
</comment>
<comment type="subcellular location">
    <subcellularLocation>
        <location evidence="1">Cytoplasm</location>
    </subcellularLocation>
</comment>
<comment type="similarity">
    <text evidence="1">Belongs to the transferase hexapeptide repeat family.</text>
</comment>
<proteinExistence type="inferred from homology"/>
<sequence length="281" mass="29295">MSHADLARTIEAAWEDRASVGPTTQGTVREAVEAALALLDSGQARVAEKSGSADWQVNQWLKKAVLLSFRLNDMSVIPGGPGGAAWWDKVPSKFEGWDADRFRAAGFRAVPGAVVRRGSYIAPGAVLMPSFVNLGAYVGEGTMVDTWATIGSCAQVGKNCHISGGAGIAGVLEPLQANPVIIEDNCFIGARAEVAEGVIVGEGSVLSMGVYIGASTKIIDRATGEVMYGRVPPYSVVVSGTQPGKPLPDGTPGPSLYCAVIVKRVDAGTRAKTGINELLRD</sequence>
<evidence type="ECO:0000255" key="1">
    <source>
        <dbReference type="HAMAP-Rule" id="MF_00811"/>
    </source>
</evidence>